<organism>
    <name type="scientific">Xenopus tropicalis</name>
    <name type="common">Western clawed frog</name>
    <name type="synonym">Silurana tropicalis</name>
    <dbReference type="NCBI Taxonomy" id="8364"/>
    <lineage>
        <taxon>Eukaryota</taxon>
        <taxon>Metazoa</taxon>
        <taxon>Chordata</taxon>
        <taxon>Craniata</taxon>
        <taxon>Vertebrata</taxon>
        <taxon>Euteleostomi</taxon>
        <taxon>Amphibia</taxon>
        <taxon>Batrachia</taxon>
        <taxon>Anura</taxon>
        <taxon>Pipoidea</taxon>
        <taxon>Pipidae</taxon>
        <taxon>Xenopodinae</taxon>
        <taxon>Xenopus</taxon>
        <taxon>Silurana</taxon>
    </lineage>
</organism>
<evidence type="ECO:0000250" key="1">
    <source>
        <dbReference type="UniProtKB" id="Q6DGE9"/>
    </source>
</evidence>
<evidence type="ECO:0000250" key="2">
    <source>
        <dbReference type="UniProtKB" id="Q8CGY6"/>
    </source>
</evidence>
<evidence type="ECO:0000250" key="3">
    <source>
        <dbReference type="UniProtKB" id="Q8IWX7"/>
    </source>
</evidence>
<evidence type="ECO:0000255" key="4"/>
<evidence type="ECO:0000269" key="5">
    <source>
    </source>
</evidence>
<evidence type="ECO:0000305" key="6"/>
<evidence type="ECO:0000312" key="7">
    <source>
        <dbReference type="EMBL" id="AAH80138.1"/>
    </source>
</evidence>
<evidence type="ECO:0000312" key="8">
    <source>
        <dbReference type="EMBL" id="ADH10457.1"/>
    </source>
</evidence>
<evidence type="ECO:0000312" key="9">
    <source>
        <dbReference type="Xenbase" id="XB-GENE-971729"/>
    </source>
</evidence>
<reference evidence="6 8" key="1">
    <citation type="journal article" date="2010" name="BMC Dev. Biol.">
        <title>Paralysis and delayed Z-disc formation in the Xenopus tropicalis unc45b mutant dicky ticker.</title>
        <authorList>
            <person name="Geach T.J."/>
            <person name="Zimmerman L.B."/>
        </authorList>
    </citation>
    <scope>NUCLEOTIDE SEQUENCE [MRNA]</scope>
    <scope>FUNCTION</scope>
    <scope>TISSUE SPECIFICITY</scope>
    <scope>MUTAGENESIS OF CYS-779</scope>
    <source>
        <tissue evidence="5">Embryo</tissue>
    </source>
</reference>
<reference evidence="6 7" key="2">
    <citation type="submission" date="2004-08" db="EMBL/GenBank/DDBJ databases">
        <authorList>
            <consortium name="NIH - Xenopus Gene Collection (XGC) project"/>
        </authorList>
    </citation>
    <scope>NUCLEOTIDE SEQUENCE [LARGE SCALE MRNA] OF 1-751</scope>
    <source>
        <tissue evidence="7">Embryo</tissue>
    </source>
</reference>
<sequence length="927" mass="103537">MEDPVQLKEEGNKYFQSNEYGQAIQCYSKALKLITDKKMQAVLYRNRSACYLKQDNYVQAAADASKAIDVDASDIKALFRRCQALEKLGKLDQAYKDVQRCATLEPKNRTFLETLHRLGTNIQEKLHVQFSTDSRVHKMFEILLDKNSEKEKREKAANNLIVLGREDAGAEQIFQNNGVNLLMQLIESKDPEMILSAIRTLSGMCTGHRARATAIVHLVGINKICSIMAVDNEEIALAACNLLQNIVDSLTGEDKKAHGKQEALVLDTKKDLKIITTHLLDMLVSKKVSGHGRDQALNLLNKNIPRYDLKNKDNSKSLFVVDAGLKKILKVLGQVPELPNCLPLTPNTRLNASVLVNKLYDDLRCDPERDNFRIICEEYITGSFDPKDMEKNLHAIQTVSGILQGPFDLGNKLLSLQGVMEMMVALTGSENEVDQLVAVEALIHASTKLSRASFIITNGVSLLKDIYKKTKNEKIKIRALVGLCKLGSAGGTDYALRQFAEGSTDKLAKQCRKWLCNPSLDIQTRKWAVEGLAYLTLDADVKDEFVEDEQSLKAMFELSKTSDKTILYSVATTLVNCTNSYDVKEVIPEMVQLAKFSKQHVPEQHPKDKKDFVEKRVKRLLKADVISALSCMVKADNSILTDQTKEQLSRVFLALCEDPKDRGIIVAQGGGKAMIPLALEGTDVGKIKASHGLAKIAAVSNPDIAFPGERVYEVVRPLVSLLNTERDGIQNFEALLALTNLSGKNDKLRQKIIKEKALPEIENYMFENHEQIRQAATECMCNLALNKEVKERFMAEGNDRLKLIILLCGEEDEVKLQRAAAGTLAMLTGAEKKLCHKMTEVTTQWMEILQRLCLSEDLQVQHRGVVIAYNLINADKELAKKLVESEMLEILTVIGKQADVPNKQHIINAAREALVKCLDYGFIKTVS</sequence>
<accession>D7REX8</accession>
<accession>Q68ER3</accession>
<feature type="chain" id="PRO_0000410949" description="Protein unc-45 homolog B">
    <location>
        <begin position="1"/>
        <end position="927"/>
    </location>
</feature>
<feature type="repeat" description="TPR 1" evidence="4">
    <location>
        <begin position="4"/>
        <end position="37"/>
    </location>
</feature>
<feature type="repeat" description="TPR 2" evidence="4">
    <location>
        <begin position="41"/>
        <end position="74"/>
    </location>
</feature>
<feature type="repeat" description="TPR 3" evidence="4">
    <location>
        <begin position="76"/>
        <end position="108"/>
    </location>
</feature>
<feature type="repeat" description="ARM 1" evidence="4">
    <location>
        <begin position="167"/>
        <end position="206"/>
    </location>
</feature>
<feature type="repeat" description="ARM 2" evidence="4">
    <location>
        <begin position="209"/>
        <end position="248"/>
    </location>
</feature>
<feature type="repeat" description="ARM 3" evidence="4">
    <location>
        <begin position="746"/>
        <end position="785"/>
    </location>
</feature>
<feature type="mutagenesis site" description="In dicky ticker (dit) mutant; impairs sarcomere formation. Causes paralysis and loss of heartbeat." evidence="5">
    <original>C</original>
    <variation>R</variation>
    <location>
        <position position="779"/>
    </location>
</feature>
<dbReference type="EMBL" id="HM053434">
    <property type="protein sequence ID" value="ADH10457.1"/>
    <property type="molecule type" value="mRNA"/>
</dbReference>
<dbReference type="EMBL" id="BC080138">
    <property type="protein sequence ID" value="AAH80138.1"/>
    <property type="status" value="ALT_SEQ"/>
    <property type="molecule type" value="mRNA"/>
</dbReference>
<dbReference type="RefSeq" id="NP_001172057.1">
    <property type="nucleotide sequence ID" value="NM_001185128.1"/>
</dbReference>
<dbReference type="SMR" id="D7REX8"/>
<dbReference type="FunCoup" id="D7REX8">
    <property type="interactions" value="260"/>
</dbReference>
<dbReference type="STRING" id="8364.ENSXETP00000030229"/>
<dbReference type="PaxDb" id="8364-ENSXETP00000029521"/>
<dbReference type="GeneID" id="493194"/>
<dbReference type="KEGG" id="xtr:493194"/>
<dbReference type="AGR" id="Xenbase:XB-GENE-971729"/>
<dbReference type="CTD" id="146862"/>
<dbReference type="Xenbase" id="XB-GENE-971729">
    <property type="gene designation" value="unc45b"/>
</dbReference>
<dbReference type="eggNOG" id="KOG4151">
    <property type="taxonomic scope" value="Eukaryota"/>
</dbReference>
<dbReference type="HOGENOM" id="CLU_007331_0_0_1"/>
<dbReference type="InParanoid" id="D7REX8"/>
<dbReference type="OMA" id="DTQTRRW"/>
<dbReference type="OrthoDB" id="199930at2759"/>
<dbReference type="PhylomeDB" id="D7REX8"/>
<dbReference type="TreeFam" id="TF314096"/>
<dbReference type="Proteomes" id="UP000008143">
    <property type="component" value="Chromosome 2"/>
</dbReference>
<dbReference type="Bgee" id="ENSXETG00000013482">
    <property type="expression patterns" value="Expressed in heart and 15 other cell types or tissues"/>
</dbReference>
<dbReference type="GO" id="GO:0031672">
    <property type="term" value="C:A band"/>
    <property type="evidence" value="ECO:0007669"/>
    <property type="project" value="UniProtKB-SubCell"/>
</dbReference>
<dbReference type="GO" id="GO:0005829">
    <property type="term" value="C:cytosol"/>
    <property type="evidence" value="ECO:0007669"/>
    <property type="project" value="UniProtKB-SubCell"/>
</dbReference>
<dbReference type="GO" id="GO:0048471">
    <property type="term" value="C:perinuclear region of cytoplasm"/>
    <property type="evidence" value="ECO:0007669"/>
    <property type="project" value="UniProtKB-SubCell"/>
</dbReference>
<dbReference type="GO" id="GO:0030018">
    <property type="term" value="C:Z disc"/>
    <property type="evidence" value="ECO:0007669"/>
    <property type="project" value="UniProtKB-SubCell"/>
</dbReference>
<dbReference type="GO" id="GO:0030154">
    <property type="term" value="P:cell differentiation"/>
    <property type="evidence" value="ECO:0007669"/>
    <property type="project" value="UniProtKB-KW"/>
</dbReference>
<dbReference type="GO" id="GO:0002088">
    <property type="term" value="P:lens development in camera-type eye"/>
    <property type="evidence" value="ECO:0000250"/>
    <property type="project" value="UniProtKB"/>
</dbReference>
<dbReference type="GO" id="GO:0007517">
    <property type="term" value="P:muscle organ development"/>
    <property type="evidence" value="ECO:0007669"/>
    <property type="project" value="UniProtKB-KW"/>
</dbReference>
<dbReference type="FunFam" id="1.25.10.10:FF:000043">
    <property type="entry name" value="Unc-45 myosin chaperone B"/>
    <property type="match status" value="1"/>
</dbReference>
<dbReference type="FunFam" id="1.25.10.10:FF:000153">
    <property type="entry name" value="Unc-45 myosin chaperone B"/>
    <property type="match status" value="1"/>
</dbReference>
<dbReference type="FunFam" id="1.25.40.10:FF:000025">
    <property type="entry name" value="Unc-45 myosin chaperone B"/>
    <property type="match status" value="1"/>
</dbReference>
<dbReference type="Gene3D" id="1.25.10.10">
    <property type="entry name" value="Leucine-rich Repeat Variant"/>
    <property type="match status" value="2"/>
</dbReference>
<dbReference type="Gene3D" id="1.25.40.10">
    <property type="entry name" value="Tetratricopeptide repeat domain"/>
    <property type="match status" value="1"/>
</dbReference>
<dbReference type="InterPro" id="IPR011989">
    <property type="entry name" value="ARM-like"/>
</dbReference>
<dbReference type="InterPro" id="IPR016024">
    <property type="entry name" value="ARM-type_fold"/>
</dbReference>
<dbReference type="InterPro" id="IPR000225">
    <property type="entry name" value="Armadillo"/>
</dbReference>
<dbReference type="InterPro" id="IPR011990">
    <property type="entry name" value="TPR-like_helical_dom_sf"/>
</dbReference>
<dbReference type="InterPro" id="IPR019734">
    <property type="entry name" value="TPR_rpt"/>
</dbReference>
<dbReference type="InterPro" id="IPR024660">
    <property type="entry name" value="UCS_central_dom"/>
</dbReference>
<dbReference type="PANTHER" id="PTHR45994">
    <property type="entry name" value="FI21225P1"/>
    <property type="match status" value="1"/>
</dbReference>
<dbReference type="PANTHER" id="PTHR45994:SF2">
    <property type="entry name" value="PROTEIN UNC-45 HOMOLOG B"/>
    <property type="match status" value="1"/>
</dbReference>
<dbReference type="Pfam" id="PF11701">
    <property type="entry name" value="UNC45-central"/>
    <property type="match status" value="1"/>
</dbReference>
<dbReference type="SMART" id="SM00185">
    <property type="entry name" value="ARM"/>
    <property type="match status" value="4"/>
</dbReference>
<dbReference type="SMART" id="SM00028">
    <property type="entry name" value="TPR"/>
    <property type="match status" value="3"/>
</dbReference>
<dbReference type="SUPFAM" id="SSF48371">
    <property type="entry name" value="ARM repeat"/>
    <property type="match status" value="2"/>
</dbReference>
<dbReference type="SUPFAM" id="SSF48452">
    <property type="entry name" value="TPR-like"/>
    <property type="match status" value="1"/>
</dbReference>
<dbReference type="PROSITE" id="PS50005">
    <property type="entry name" value="TPR"/>
    <property type="match status" value="3"/>
</dbReference>
<dbReference type="PROSITE" id="PS50293">
    <property type="entry name" value="TPR_REGION"/>
    <property type="match status" value="1"/>
</dbReference>
<comment type="function">
    <text evidence="1 2 5">Acts as a co-chaperone for HSP90 and is required for proper folding of the myosin motor domain (By similarity). Plays a role in sarcomere formation during muscle cell development. Is necessary for normal early lens development.</text>
</comment>
<comment type="subcellular location">
    <subcellularLocation>
        <location evidence="1">Cytoplasm</location>
        <location evidence="1">Myofibril</location>
        <location evidence="1">Sarcomere</location>
        <location evidence="1">Z line</location>
    </subcellularLocation>
    <subcellularLocation>
        <location evidence="3">Cytoplasm</location>
        <location evidence="3">Myofibril</location>
        <location evidence="3">Sarcomere</location>
        <location evidence="3">A band</location>
    </subcellularLocation>
    <subcellularLocation>
        <location evidence="1">Cytoplasm</location>
        <location evidence="1">Perinuclear region</location>
    </subcellularLocation>
    <subcellularLocation>
        <location evidence="2">Cytoplasm</location>
        <location evidence="2">Cytosol</location>
    </subcellularLocation>
    <text evidence="1">Expressed at the Z line and in the perinuclear region of myofibrils. Translocates to the A band in response to stress conditions and fibril damage.</text>
</comment>
<comment type="tissue specificity">
    <text evidence="5">Detected initially throughout the somites and the heart and gradually also expressed in the jaw, branchial arches and body wall muscles at later embryonic stages.</text>
</comment>
<comment type="sequence caution" evidence="6">
    <conflict type="miscellaneous discrepancy">
        <sequence resource="EMBL-CDS" id="AAH80138"/>
    </conflict>
    <text>Contaminating sequence. Potential poly-A sequence.</text>
</comment>
<gene>
    <name evidence="8 9" type="primary">unc45b</name>
    <name evidence="7" type="synonym">cmya4</name>
</gene>
<proteinExistence type="evidence at protein level"/>
<name>UN45B_XENTR</name>
<protein>
    <recommendedName>
        <fullName evidence="3">Protein unc-45 homolog B</fullName>
        <shortName evidence="3">Unc-45B</shortName>
    </recommendedName>
</protein>
<keyword id="KW-0143">Chaperone</keyword>
<keyword id="KW-0963">Cytoplasm</keyword>
<keyword id="KW-0217">Developmental protein</keyword>
<keyword id="KW-0221">Differentiation</keyword>
<keyword id="KW-0517">Myogenesis</keyword>
<keyword id="KW-1185">Reference proteome</keyword>
<keyword id="KW-0677">Repeat</keyword>
<keyword id="KW-0802">TPR repeat</keyword>